<name>ENO_STRP3</name>
<dbReference type="EC" id="4.2.1.11" evidence="2"/>
<dbReference type="EMBL" id="AE014074">
    <property type="protein sequence ID" value="AAM79086.1"/>
    <property type="molecule type" value="Genomic_DNA"/>
</dbReference>
<dbReference type="RefSeq" id="WP_002985288.1">
    <property type="nucleotide sequence ID" value="NC_004070.1"/>
</dbReference>
<dbReference type="SMR" id="P0DA94"/>
<dbReference type="GeneID" id="69901134"/>
<dbReference type="KEGG" id="spg:SpyM3_0479"/>
<dbReference type="HOGENOM" id="CLU_031223_2_1_9"/>
<dbReference type="UniPathway" id="UPA00109">
    <property type="reaction ID" value="UER00187"/>
</dbReference>
<dbReference type="Proteomes" id="UP000000564">
    <property type="component" value="Chromosome"/>
</dbReference>
<dbReference type="GO" id="GO:0009986">
    <property type="term" value="C:cell surface"/>
    <property type="evidence" value="ECO:0007669"/>
    <property type="project" value="UniProtKB-SubCell"/>
</dbReference>
<dbReference type="GO" id="GO:0005576">
    <property type="term" value="C:extracellular region"/>
    <property type="evidence" value="ECO:0007669"/>
    <property type="project" value="UniProtKB-SubCell"/>
</dbReference>
<dbReference type="GO" id="GO:0009274">
    <property type="term" value="C:peptidoglycan-based cell wall"/>
    <property type="evidence" value="ECO:0007669"/>
    <property type="project" value="UniProtKB-ARBA"/>
</dbReference>
<dbReference type="GO" id="GO:0000015">
    <property type="term" value="C:phosphopyruvate hydratase complex"/>
    <property type="evidence" value="ECO:0007669"/>
    <property type="project" value="InterPro"/>
</dbReference>
<dbReference type="GO" id="GO:0000287">
    <property type="term" value="F:magnesium ion binding"/>
    <property type="evidence" value="ECO:0007669"/>
    <property type="project" value="UniProtKB-UniRule"/>
</dbReference>
<dbReference type="GO" id="GO:0004634">
    <property type="term" value="F:phosphopyruvate hydratase activity"/>
    <property type="evidence" value="ECO:0007669"/>
    <property type="project" value="UniProtKB-UniRule"/>
</dbReference>
<dbReference type="GO" id="GO:0006096">
    <property type="term" value="P:glycolytic process"/>
    <property type="evidence" value="ECO:0007669"/>
    <property type="project" value="UniProtKB-UniRule"/>
</dbReference>
<dbReference type="CDD" id="cd03313">
    <property type="entry name" value="enolase"/>
    <property type="match status" value="1"/>
</dbReference>
<dbReference type="FunFam" id="3.20.20.120:FF:000001">
    <property type="entry name" value="Enolase"/>
    <property type="match status" value="1"/>
</dbReference>
<dbReference type="FunFam" id="3.30.390.10:FF:000001">
    <property type="entry name" value="Enolase"/>
    <property type="match status" value="1"/>
</dbReference>
<dbReference type="Gene3D" id="3.20.20.120">
    <property type="entry name" value="Enolase-like C-terminal domain"/>
    <property type="match status" value="1"/>
</dbReference>
<dbReference type="Gene3D" id="3.30.390.10">
    <property type="entry name" value="Enolase-like, N-terminal domain"/>
    <property type="match status" value="1"/>
</dbReference>
<dbReference type="HAMAP" id="MF_00318">
    <property type="entry name" value="Enolase"/>
    <property type="match status" value="1"/>
</dbReference>
<dbReference type="InterPro" id="IPR000941">
    <property type="entry name" value="Enolase"/>
</dbReference>
<dbReference type="InterPro" id="IPR036849">
    <property type="entry name" value="Enolase-like_C_sf"/>
</dbReference>
<dbReference type="InterPro" id="IPR029017">
    <property type="entry name" value="Enolase-like_N"/>
</dbReference>
<dbReference type="InterPro" id="IPR020810">
    <property type="entry name" value="Enolase_C"/>
</dbReference>
<dbReference type="InterPro" id="IPR020809">
    <property type="entry name" value="Enolase_CS"/>
</dbReference>
<dbReference type="InterPro" id="IPR020811">
    <property type="entry name" value="Enolase_N"/>
</dbReference>
<dbReference type="NCBIfam" id="TIGR01060">
    <property type="entry name" value="eno"/>
    <property type="match status" value="1"/>
</dbReference>
<dbReference type="PANTHER" id="PTHR11902">
    <property type="entry name" value="ENOLASE"/>
    <property type="match status" value="1"/>
</dbReference>
<dbReference type="PANTHER" id="PTHR11902:SF1">
    <property type="entry name" value="ENOLASE"/>
    <property type="match status" value="1"/>
</dbReference>
<dbReference type="Pfam" id="PF00113">
    <property type="entry name" value="Enolase_C"/>
    <property type="match status" value="1"/>
</dbReference>
<dbReference type="Pfam" id="PF03952">
    <property type="entry name" value="Enolase_N"/>
    <property type="match status" value="1"/>
</dbReference>
<dbReference type="PIRSF" id="PIRSF001400">
    <property type="entry name" value="Enolase"/>
    <property type="match status" value="1"/>
</dbReference>
<dbReference type="PRINTS" id="PR00148">
    <property type="entry name" value="ENOLASE"/>
</dbReference>
<dbReference type="SFLD" id="SFLDS00001">
    <property type="entry name" value="Enolase"/>
    <property type="match status" value="1"/>
</dbReference>
<dbReference type="SFLD" id="SFLDF00002">
    <property type="entry name" value="enolase"/>
    <property type="match status" value="1"/>
</dbReference>
<dbReference type="SMART" id="SM01192">
    <property type="entry name" value="Enolase_C"/>
    <property type="match status" value="1"/>
</dbReference>
<dbReference type="SMART" id="SM01193">
    <property type="entry name" value="Enolase_N"/>
    <property type="match status" value="1"/>
</dbReference>
<dbReference type="SUPFAM" id="SSF51604">
    <property type="entry name" value="Enolase C-terminal domain-like"/>
    <property type="match status" value="1"/>
</dbReference>
<dbReference type="SUPFAM" id="SSF54826">
    <property type="entry name" value="Enolase N-terminal domain-like"/>
    <property type="match status" value="1"/>
</dbReference>
<dbReference type="PROSITE" id="PS00164">
    <property type="entry name" value="ENOLASE"/>
    <property type="match status" value="1"/>
</dbReference>
<gene>
    <name evidence="2" type="primary">eno</name>
    <name type="ordered locus">SpyM3_0479</name>
</gene>
<evidence type="ECO:0000250" key="1"/>
<evidence type="ECO:0000255" key="2">
    <source>
        <dbReference type="HAMAP-Rule" id="MF_00318"/>
    </source>
</evidence>
<keyword id="KW-0963">Cytoplasm</keyword>
<keyword id="KW-0324">Glycolysis</keyword>
<keyword id="KW-0456">Lyase</keyword>
<keyword id="KW-0460">Magnesium</keyword>
<keyword id="KW-0479">Metal-binding</keyword>
<keyword id="KW-0964">Secreted</keyword>
<proteinExistence type="inferred from homology"/>
<reference key="1">
    <citation type="journal article" date="2002" name="Proc. Natl. Acad. Sci. U.S.A.">
        <title>Genome sequence of a serotype M3 strain of group A Streptococcus: phage-encoded toxins, the high-virulence phenotype, and clone emergence.</title>
        <authorList>
            <person name="Beres S.B."/>
            <person name="Sylva G.L."/>
            <person name="Barbian K.D."/>
            <person name="Lei B."/>
            <person name="Hoff J.S."/>
            <person name="Mammarella N.D."/>
            <person name="Liu M.-Y."/>
            <person name="Smoot J.C."/>
            <person name="Porcella S.F."/>
            <person name="Parkins L.D."/>
            <person name="Campbell D.S."/>
            <person name="Smith T.M."/>
            <person name="McCormick J.K."/>
            <person name="Leung D.Y.M."/>
            <person name="Schlievert P.M."/>
            <person name="Musser J.M."/>
        </authorList>
    </citation>
    <scope>NUCLEOTIDE SEQUENCE [LARGE SCALE GENOMIC DNA]</scope>
    <source>
        <strain>ATCC BAA-595 / MGAS315</strain>
    </source>
</reference>
<comment type="function">
    <text evidence="2">Catalyzes the reversible conversion of 2-phosphoglycerate (2-PG) into phosphoenolpyruvate (PEP). It is essential for the degradation of carbohydrates via glycolysis.</text>
</comment>
<comment type="catalytic activity">
    <reaction evidence="2">
        <text>(2R)-2-phosphoglycerate = phosphoenolpyruvate + H2O</text>
        <dbReference type="Rhea" id="RHEA:10164"/>
        <dbReference type="ChEBI" id="CHEBI:15377"/>
        <dbReference type="ChEBI" id="CHEBI:58289"/>
        <dbReference type="ChEBI" id="CHEBI:58702"/>
        <dbReference type="EC" id="4.2.1.11"/>
    </reaction>
</comment>
<comment type="cofactor">
    <cofactor evidence="2">
        <name>Mg(2+)</name>
        <dbReference type="ChEBI" id="CHEBI:18420"/>
    </cofactor>
    <text evidence="2">Binds a second Mg(2+) ion via substrate during catalysis.</text>
</comment>
<comment type="pathway">
    <text evidence="2">Carbohydrate degradation; glycolysis; pyruvate from D-glyceraldehyde 3-phosphate: step 4/5.</text>
</comment>
<comment type="subcellular location">
    <subcellularLocation>
        <location evidence="2">Cytoplasm</location>
    </subcellularLocation>
    <subcellularLocation>
        <location evidence="2">Secreted</location>
    </subcellularLocation>
    <subcellularLocation>
        <location evidence="2">Cell surface</location>
    </subcellularLocation>
    <text evidence="2">Fractions of enolase are present in both the cytoplasm and on the cell surface.</text>
</comment>
<comment type="similarity">
    <text evidence="2">Belongs to the enolase family.</text>
</comment>
<accession>P0DA94</accession>
<accession>P69950</accession>
<accession>P82479</accession>
<protein>
    <recommendedName>
        <fullName evidence="2">Enolase</fullName>
        <ecNumber evidence="2">4.2.1.11</ecNumber>
    </recommendedName>
    <alternativeName>
        <fullName evidence="2">2-phospho-D-glycerate hydro-lyase</fullName>
    </alternativeName>
    <alternativeName>
        <fullName evidence="2">2-phosphoglycerate dehydratase</fullName>
    </alternativeName>
</protein>
<organism>
    <name type="scientific">Streptococcus pyogenes serotype M3 (strain ATCC BAA-595 / MGAS315)</name>
    <dbReference type="NCBI Taxonomy" id="198466"/>
    <lineage>
        <taxon>Bacteria</taxon>
        <taxon>Bacillati</taxon>
        <taxon>Bacillota</taxon>
        <taxon>Bacilli</taxon>
        <taxon>Lactobacillales</taxon>
        <taxon>Streptococcaceae</taxon>
        <taxon>Streptococcus</taxon>
    </lineage>
</organism>
<sequence>MSIITDVYAREVLDSRGNPTLEVEVYTESGAFGRGMVPSGASTGEHEAVELRDGDKSRYLGLGTQKAVDNVNNIIAEAIIGYDVRDQQAIDRAMIALDGTPNKGKLGANAILGVSIAVARAAADYLEVPLYTYLGGFNTKVLPTPMMNIINGGSHSDAPIAFQEFMIMPVGAPTFKEGLRWGAEVFHALKKILKERGLVTAVGDEGGFAPKFEGTEDGVETILKAIEAAGYEAGENGIMIGFDCASSEFYDKERKVYDYTKFEGEGAAVRTSAEQVDYLEELVNKYPIITIEDGMDENDWDGWKVLTERLGKRVQLVGDDFFVTNTEYLARGIKENAANSILIKVNQIGTLTETFEAIEMAKEAGYTAVVSHRSGETEDSTIADIAVATNAGQIKTGSLSRTDRIAKYNQLLRIEDQLGEVAQYKGIKSFYNLKK</sequence>
<feature type="initiator methionine" description="Removed" evidence="1">
    <location>
        <position position="1"/>
    </location>
</feature>
<feature type="chain" id="PRO_0000133983" description="Enolase">
    <location>
        <begin position="2"/>
        <end position="435"/>
    </location>
</feature>
<feature type="active site" description="Proton donor" evidence="2">
    <location>
        <position position="205"/>
    </location>
</feature>
<feature type="active site" description="Proton acceptor" evidence="2">
    <location>
        <position position="344"/>
    </location>
</feature>
<feature type="binding site" evidence="2">
    <location>
        <position position="163"/>
    </location>
    <ligand>
        <name>(2R)-2-phosphoglycerate</name>
        <dbReference type="ChEBI" id="CHEBI:58289"/>
    </ligand>
</feature>
<feature type="binding site" evidence="2">
    <location>
        <position position="243"/>
    </location>
    <ligand>
        <name>Mg(2+)</name>
        <dbReference type="ChEBI" id="CHEBI:18420"/>
    </ligand>
</feature>
<feature type="binding site" evidence="2">
    <location>
        <position position="292"/>
    </location>
    <ligand>
        <name>Mg(2+)</name>
        <dbReference type="ChEBI" id="CHEBI:18420"/>
    </ligand>
</feature>
<feature type="binding site" evidence="2">
    <location>
        <position position="319"/>
    </location>
    <ligand>
        <name>Mg(2+)</name>
        <dbReference type="ChEBI" id="CHEBI:18420"/>
    </ligand>
</feature>
<feature type="binding site" evidence="2">
    <location>
        <position position="344"/>
    </location>
    <ligand>
        <name>(2R)-2-phosphoglycerate</name>
        <dbReference type="ChEBI" id="CHEBI:58289"/>
    </ligand>
</feature>
<feature type="binding site" evidence="2">
    <location>
        <position position="373"/>
    </location>
    <ligand>
        <name>(2R)-2-phosphoglycerate</name>
        <dbReference type="ChEBI" id="CHEBI:58289"/>
    </ligand>
</feature>
<feature type="binding site" evidence="2">
    <location>
        <position position="374"/>
    </location>
    <ligand>
        <name>(2R)-2-phosphoglycerate</name>
        <dbReference type="ChEBI" id="CHEBI:58289"/>
    </ligand>
</feature>
<feature type="binding site" evidence="2">
    <location>
        <position position="395"/>
    </location>
    <ligand>
        <name>(2R)-2-phosphoglycerate</name>
        <dbReference type="ChEBI" id="CHEBI:58289"/>
    </ligand>
</feature>